<feature type="chain" id="PRO_1000008886" description="Elongation factor 2">
    <location>
        <begin position="1"/>
        <end position="736"/>
    </location>
</feature>
<feature type="domain" description="tr-type G">
    <location>
        <begin position="18"/>
        <end position="261"/>
    </location>
</feature>
<feature type="binding site" evidence="1">
    <location>
        <begin position="27"/>
        <end position="34"/>
    </location>
    <ligand>
        <name>GTP</name>
        <dbReference type="ChEBI" id="CHEBI:37565"/>
    </ligand>
</feature>
<feature type="binding site" evidence="1">
    <location>
        <begin position="93"/>
        <end position="97"/>
    </location>
    <ligand>
        <name>GTP</name>
        <dbReference type="ChEBI" id="CHEBI:37565"/>
    </ligand>
</feature>
<feature type="binding site" evidence="1">
    <location>
        <begin position="147"/>
        <end position="150"/>
    </location>
    <ligand>
        <name>GTP</name>
        <dbReference type="ChEBI" id="CHEBI:37565"/>
    </ligand>
</feature>
<feature type="modified residue" description="Diphthamide" evidence="1">
    <location>
        <position position="602"/>
    </location>
</feature>
<evidence type="ECO:0000255" key="1">
    <source>
        <dbReference type="HAMAP-Rule" id="MF_00054"/>
    </source>
</evidence>
<comment type="function">
    <text evidence="1">Catalyzes the GTP-dependent ribosomal translocation step during translation elongation. During this step, the ribosome changes from the pre-translocational (PRE) to the post-translocational (POST) state as the newly formed A-site-bound peptidyl-tRNA and P-site-bound deacylated tRNA move to the P and E sites, respectively. Catalyzes the coordinated movement of the two tRNA molecules, the mRNA and conformational changes in the ribosome.</text>
</comment>
<comment type="subcellular location">
    <subcellularLocation>
        <location evidence="1">Cytoplasm</location>
    </subcellularLocation>
</comment>
<comment type="similarity">
    <text evidence="1">Belongs to the TRAFAC class translation factor GTPase superfamily. Classic translation factor GTPase family. EF-G/EF-2 subfamily.</text>
</comment>
<sequence>MVRYKQTMEILKIMRNLEQVRNIGITAHVDHGKTTLSDSLLAAAGIISEKIAGEALALDYLDVEQRRGITVKSANISLYHEYKGKPYVINLIDTPGHVDFSAKTTRAMRVIDGAILVVDAVEGVMTQTEMYLRAALEERVRPVLFINKVDRLIKELRLSPQEIQQRFVQIIKEVNQLIAMYADKEFKTKWQLDPAKGQVAFGSARDRWGFTVPMAKQKGIKFSDIVDLYKKGKEALPELQKLAPLHEAVLDMVVKFIPNPREAQKYRLPKIWHGDLNSEIGKAMLETDPNGPLVMLVNDVRIDPHAGLVATGRVFSGTLRAGEEVWLVNARMKQKVLQVSLYMGPYRELADEIVAGNIAAVLGLDKARAGETVVAVEYKDMMTPFEKLRMISEPVVTVAIEPKNPRDLPKLIDALHKLSIEDPSLVVRINEETGEYLLSGMGPLHIEIALTFLKENYGLDVIASQPIIVYRESIRDKSRVFEGKSPNKHNKLYISVEPLDEKTISLIHDGIITEDMDPKQRAKVLREEAGWPTDQARRIWAIDENINVFVDLTTGVQHLREVKDTIIQGFRLAMREGPLAMEPVRGVKVILHDAIIHEDPAHRGPGQIYPAVRNAIYAGMLTAKPTLLEPIQKLDIKAPMEYLGNITTIITKKRGKILQVLQQGAVARIIAEIPVAETFDLAEQLRGATAGKAIWGQEFSRWAPVPDSMLLDLVRKIRERKGLKPEPPRPEDFIGF</sequence>
<reference key="1">
    <citation type="journal article" date="2009" name="BMC Genomics">
        <title>The complete genome sequence of Staphylothermus marinus reveals differences in sulfur metabolism among heterotrophic Crenarchaeota.</title>
        <authorList>
            <person name="Anderson I.J."/>
            <person name="Dharmarajan L."/>
            <person name="Rodriguez J."/>
            <person name="Hooper S."/>
            <person name="Porat I."/>
            <person name="Ulrich L.E."/>
            <person name="Elkins J.G."/>
            <person name="Mavromatis K."/>
            <person name="Sun H."/>
            <person name="Land M."/>
            <person name="Lapidus A."/>
            <person name="Lucas S."/>
            <person name="Barry K."/>
            <person name="Huber H."/>
            <person name="Zhulin I.B."/>
            <person name="Whitman W.B."/>
            <person name="Mukhopadhyay B."/>
            <person name="Woese C."/>
            <person name="Bristow J."/>
            <person name="Kyrpides N."/>
        </authorList>
    </citation>
    <scope>NUCLEOTIDE SEQUENCE [LARGE SCALE GENOMIC DNA]</scope>
    <source>
        <strain>ATCC 43588 / DSM 3639 / JCM 9404 / F1</strain>
    </source>
</reference>
<reference key="2">
    <citation type="journal article" date="2009" name="Stand. Genomic Sci.">
        <title>Complete genome sequence of Staphylothermus marinus Stetter and Fiala 1986 type strain F1.</title>
        <authorList>
            <person name="Anderson I.J."/>
            <person name="Sun H."/>
            <person name="Lapidus A."/>
            <person name="Copeland A."/>
            <person name="Glavina Del Rio T."/>
            <person name="Tice H."/>
            <person name="Dalin E."/>
            <person name="Lucas S."/>
            <person name="Barry K."/>
            <person name="Land M."/>
            <person name="Richardson P."/>
            <person name="Huber H."/>
            <person name="Kyrpides N.C."/>
        </authorList>
    </citation>
    <scope>NUCLEOTIDE SEQUENCE [LARGE SCALE GENOMIC DNA]</scope>
    <source>
        <strain>ATCC 43588 / DSM 3639 / JCM 9404 / F1</strain>
    </source>
</reference>
<proteinExistence type="inferred from homology"/>
<gene>
    <name evidence="1" type="primary">fusA</name>
    <name type="ordered locus">Smar_0866</name>
</gene>
<name>EF2_STAMF</name>
<keyword id="KW-0963">Cytoplasm</keyword>
<keyword id="KW-0251">Elongation factor</keyword>
<keyword id="KW-0342">GTP-binding</keyword>
<keyword id="KW-0547">Nucleotide-binding</keyword>
<keyword id="KW-0648">Protein biosynthesis</keyword>
<keyword id="KW-1185">Reference proteome</keyword>
<accession>A3DMV6</accession>
<organism>
    <name type="scientific">Staphylothermus marinus (strain ATCC 43588 / DSM 3639 / JCM 9404 / F1)</name>
    <dbReference type="NCBI Taxonomy" id="399550"/>
    <lineage>
        <taxon>Archaea</taxon>
        <taxon>Thermoproteota</taxon>
        <taxon>Thermoprotei</taxon>
        <taxon>Desulfurococcales</taxon>
        <taxon>Desulfurococcaceae</taxon>
        <taxon>Staphylothermus</taxon>
    </lineage>
</organism>
<protein>
    <recommendedName>
        <fullName evidence="1">Elongation factor 2</fullName>
        <shortName evidence="1">EF-2</shortName>
    </recommendedName>
</protein>
<dbReference type="EMBL" id="CP000575">
    <property type="protein sequence ID" value="ABN69966.1"/>
    <property type="molecule type" value="Genomic_DNA"/>
</dbReference>
<dbReference type="RefSeq" id="WP_011839157.1">
    <property type="nucleotide sequence ID" value="NC_009033.1"/>
</dbReference>
<dbReference type="SMR" id="A3DMV6"/>
<dbReference type="STRING" id="399550.Smar_0866"/>
<dbReference type="GeneID" id="4907336"/>
<dbReference type="KEGG" id="smr:Smar_0866"/>
<dbReference type="eggNOG" id="arCOG01559">
    <property type="taxonomic scope" value="Archaea"/>
</dbReference>
<dbReference type="HOGENOM" id="CLU_002794_11_1_2"/>
<dbReference type="OrthoDB" id="6290at2157"/>
<dbReference type="Proteomes" id="UP000000254">
    <property type="component" value="Chromosome"/>
</dbReference>
<dbReference type="GO" id="GO:0005829">
    <property type="term" value="C:cytosol"/>
    <property type="evidence" value="ECO:0007669"/>
    <property type="project" value="TreeGrafter"/>
</dbReference>
<dbReference type="GO" id="GO:1990904">
    <property type="term" value="C:ribonucleoprotein complex"/>
    <property type="evidence" value="ECO:0007669"/>
    <property type="project" value="TreeGrafter"/>
</dbReference>
<dbReference type="GO" id="GO:0005525">
    <property type="term" value="F:GTP binding"/>
    <property type="evidence" value="ECO:0007669"/>
    <property type="project" value="UniProtKB-UniRule"/>
</dbReference>
<dbReference type="GO" id="GO:0003924">
    <property type="term" value="F:GTPase activity"/>
    <property type="evidence" value="ECO:0007669"/>
    <property type="project" value="InterPro"/>
</dbReference>
<dbReference type="GO" id="GO:0003746">
    <property type="term" value="F:translation elongation factor activity"/>
    <property type="evidence" value="ECO:0007669"/>
    <property type="project" value="UniProtKB-UniRule"/>
</dbReference>
<dbReference type="CDD" id="cd01681">
    <property type="entry name" value="aeEF2_snRNP_like_IV"/>
    <property type="match status" value="1"/>
</dbReference>
<dbReference type="CDD" id="cd01885">
    <property type="entry name" value="EF2"/>
    <property type="match status" value="1"/>
</dbReference>
<dbReference type="CDD" id="cd16268">
    <property type="entry name" value="EF2_II"/>
    <property type="match status" value="1"/>
</dbReference>
<dbReference type="CDD" id="cd16261">
    <property type="entry name" value="EF2_snRNP_III"/>
    <property type="match status" value="1"/>
</dbReference>
<dbReference type="CDD" id="cd01514">
    <property type="entry name" value="Elongation_Factor_C"/>
    <property type="match status" value="1"/>
</dbReference>
<dbReference type="FunFam" id="3.30.230.10:FF:000009">
    <property type="entry name" value="116 kDa U5 small nuclear ribonucleoprotein component"/>
    <property type="match status" value="1"/>
</dbReference>
<dbReference type="FunFam" id="3.30.70.870:FF:000002">
    <property type="entry name" value="Translation elongation factor 2"/>
    <property type="match status" value="1"/>
</dbReference>
<dbReference type="Gene3D" id="3.30.230.10">
    <property type="match status" value="1"/>
</dbReference>
<dbReference type="Gene3D" id="3.30.70.240">
    <property type="match status" value="1"/>
</dbReference>
<dbReference type="Gene3D" id="3.30.70.870">
    <property type="entry name" value="Elongation Factor G (Translational Gtpase), domain 3"/>
    <property type="match status" value="1"/>
</dbReference>
<dbReference type="Gene3D" id="3.40.50.300">
    <property type="entry name" value="P-loop containing nucleotide triphosphate hydrolases"/>
    <property type="match status" value="1"/>
</dbReference>
<dbReference type="Gene3D" id="2.40.30.10">
    <property type="entry name" value="Translation factors"/>
    <property type="match status" value="1"/>
</dbReference>
<dbReference type="HAMAP" id="MF_00054_A">
    <property type="entry name" value="EF_G_EF_2_A"/>
    <property type="match status" value="1"/>
</dbReference>
<dbReference type="InterPro" id="IPR041095">
    <property type="entry name" value="EFG_II"/>
</dbReference>
<dbReference type="InterPro" id="IPR035647">
    <property type="entry name" value="EFG_III/V"/>
</dbReference>
<dbReference type="InterPro" id="IPR000640">
    <property type="entry name" value="EFG_V-like"/>
</dbReference>
<dbReference type="InterPro" id="IPR004161">
    <property type="entry name" value="EFTu-like_2"/>
</dbReference>
<dbReference type="InterPro" id="IPR031157">
    <property type="entry name" value="G_TR_CS"/>
</dbReference>
<dbReference type="InterPro" id="IPR027417">
    <property type="entry name" value="P-loop_NTPase"/>
</dbReference>
<dbReference type="InterPro" id="IPR020568">
    <property type="entry name" value="Ribosomal_Su5_D2-typ_SF"/>
</dbReference>
<dbReference type="InterPro" id="IPR014721">
    <property type="entry name" value="Ribsml_uS5_D2-typ_fold_subgr"/>
</dbReference>
<dbReference type="InterPro" id="IPR005225">
    <property type="entry name" value="Small_GTP-bd"/>
</dbReference>
<dbReference type="InterPro" id="IPR000795">
    <property type="entry name" value="T_Tr_GTP-bd_dom"/>
</dbReference>
<dbReference type="InterPro" id="IPR009000">
    <property type="entry name" value="Transl_B-barrel_sf"/>
</dbReference>
<dbReference type="InterPro" id="IPR004543">
    <property type="entry name" value="Transl_elong_EFG/EF2_arc"/>
</dbReference>
<dbReference type="InterPro" id="IPR005517">
    <property type="entry name" value="Transl_elong_EFG/EF2_IV"/>
</dbReference>
<dbReference type="NCBIfam" id="TIGR00490">
    <property type="entry name" value="aEF-2"/>
    <property type="match status" value="1"/>
</dbReference>
<dbReference type="NCBIfam" id="TIGR00231">
    <property type="entry name" value="small_GTP"/>
    <property type="match status" value="1"/>
</dbReference>
<dbReference type="PANTHER" id="PTHR42908:SF3">
    <property type="entry name" value="ELONGATION FACTOR-LIKE GTPASE 1"/>
    <property type="match status" value="1"/>
</dbReference>
<dbReference type="PANTHER" id="PTHR42908">
    <property type="entry name" value="TRANSLATION ELONGATION FACTOR-RELATED"/>
    <property type="match status" value="1"/>
</dbReference>
<dbReference type="Pfam" id="PF00679">
    <property type="entry name" value="EFG_C"/>
    <property type="match status" value="1"/>
</dbReference>
<dbReference type="Pfam" id="PF14492">
    <property type="entry name" value="EFG_III"/>
    <property type="match status" value="1"/>
</dbReference>
<dbReference type="Pfam" id="PF03764">
    <property type="entry name" value="EFG_IV"/>
    <property type="match status" value="1"/>
</dbReference>
<dbReference type="Pfam" id="PF00009">
    <property type="entry name" value="GTP_EFTU"/>
    <property type="match status" value="1"/>
</dbReference>
<dbReference type="Pfam" id="PF03144">
    <property type="entry name" value="GTP_EFTU_D2"/>
    <property type="match status" value="1"/>
</dbReference>
<dbReference type="PRINTS" id="PR00315">
    <property type="entry name" value="ELONGATNFCT"/>
</dbReference>
<dbReference type="SMART" id="SM00838">
    <property type="entry name" value="EFG_C"/>
    <property type="match status" value="1"/>
</dbReference>
<dbReference type="SMART" id="SM00889">
    <property type="entry name" value="EFG_IV"/>
    <property type="match status" value="1"/>
</dbReference>
<dbReference type="SUPFAM" id="SSF54980">
    <property type="entry name" value="EF-G C-terminal domain-like"/>
    <property type="match status" value="2"/>
</dbReference>
<dbReference type="SUPFAM" id="SSF52540">
    <property type="entry name" value="P-loop containing nucleoside triphosphate hydrolases"/>
    <property type="match status" value="1"/>
</dbReference>
<dbReference type="SUPFAM" id="SSF54211">
    <property type="entry name" value="Ribosomal protein S5 domain 2-like"/>
    <property type="match status" value="1"/>
</dbReference>
<dbReference type="SUPFAM" id="SSF50447">
    <property type="entry name" value="Translation proteins"/>
    <property type="match status" value="1"/>
</dbReference>
<dbReference type="PROSITE" id="PS00301">
    <property type="entry name" value="G_TR_1"/>
    <property type="match status" value="1"/>
</dbReference>
<dbReference type="PROSITE" id="PS51722">
    <property type="entry name" value="G_TR_2"/>
    <property type="match status" value="1"/>
</dbReference>